<feature type="signal peptide" evidence="2">
    <location>
        <begin position="1"/>
        <end position="17"/>
    </location>
</feature>
<feature type="chain" id="PRO_0000421898" description="Toxin Acra3">
    <location>
        <begin position="18"/>
        <end position="83"/>
    </location>
</feature>
<feature type="domain" description="LCN-type CS-alpha/beta" evidence="1">
    <location>
        <begin position="19"/>
        <end position="82"/>
    </location>
</feature>
<feature type="modified residue" description="Serine amide" evidence="2">
    <location>
        <position position="83"/>
    </location>
</feature>
<feature type="disulfide bond" evidence="1">
    <location>
        <begin position="30"/>
        <end position="81"/>
    </location>
</feature>
<feature type="disulfide bond" evidence="1">
    <location>
        <begin position="34"/>
        <end position="57"/>
    </location>
</feature>
<feature type="disulfide bond" evidence="1">
    <location>
        <begin position="43"/>
        <end position="62"/>
    </location>
</feature>
<feature type="disulfide bond" evidence="1">
    <location>
        <begin position="47"/>
        <end position="64"/>
    </location>
</feature>
<accession>E7BLC7</accession>
<keyword id="KW-0027">Amidation</keyword>
<keyword id="KW-0903">Direct protein sequencing</keyword>
<keyword id="KW-1015">Disulfide bond</keyword>
<keyword id="KW-0872">Ion channel impairing toxin</keyword>
<keyword id="KW-0528">Neurotoxin</keyword>
<keyword id="KW-0964">Secreted</keyword>
<keyword id="KW-0732">Signal</keyword>
<keyword id="KW-0800">Toxin</keyword>
<evidence type="ECO:0000255" key="1">
    <source>
        <dbReference type="PROSITE-ProRule" id="PRU01210"/>
    </source>
</evidence>
<evidence type="ECO:0000269" key="2">
    <source>
    </source>
</evidence>
<evidence type="ECO:0000269" key="3">
    <source>
    </source>
</evidence>
<evidence type="ECO:0000303" key="4">
    <source>
    </source>
</evidence>
<evidence type="ECO:0000303" key="5">
    <source>
    </source>
</evidence>
<evidence type="ECO:0000305" key="6"/>
<evidence type="ECO:0000305" key="7">
    <source>
    </source>
</evidence>
<dbReference type="EMBL" id="GQ454796">
    <property type="protein sequence ID" value="ADK12684.1"/>
    <property type="molecule type" value="mRNA"/>
</dbReference>
<dbReference type="SMR" id="E7BLC7"/>
<dbReference type="GO" id="GO:0005576">
    <property type="term" value="C:extracellular region"/>
    <property type="evidence" value="ECO:0007669"/>
    <property type="project" value="UniProtKB-SubCell"/>
</dbReference>
<dbReference type="GO" id="GO:0019871">
    <property type="term" value="F:sodium channel inhibitor activity"/>
    <property type="evidence" value="ECO:0007669"/>
    <property type="project" value="InterPro"/>
</dbReference>
<dbReference type="GO" id="GO:0090729">
    <property type="term" value="F:toxin activity"/>
    <property type="evidence" value="ECO:0007669"/>
    <property type="project" value="UniProtKB-KW"/>
</dbReference>
<dbReference type="GO" id="GO:0006952">
    <property type="term" value="P:defense response"/>
    <property type="evidence" value="ECO:0007669"/>
    <property type="project" value="InterPro"/>
</dbReference>
<dbReference type="CDD" id="cd23106">
    <property type="entry name" value="neurotoxins_LC_scorpion"/>
    <property type="match status" value="1"/>
</dbReference>
<dbReference type="Gene3D" id="3.30.30.10">
    <property type="entry name" value="Knottin, scorpion toxin-like"/>
    <property type="match status" value="1"/>
</dbReference>
<dbReference type="InterPro" id="IPR044062">
    <property type="entry name" value="LCN-type_CS_alpha_beta_dom"/>
</dbReference>
<dbReference type="InterPro" id="IPR003614">
    <property type="entry name" value="Scorpion_toxin-like"/>
</dbReference>
<dbReference type="InterPro" id="IPR036574">
    <property type="entry name" value="Scorpion_toxin-like_sf"/>
</dbReference>
<dbReference type="InterPro" id="IPR018218">
    <property type="entry name" value="Scorpion_toxinL"/>
</dbReference>
<dbReference type="InterPro" id="IPR002061">
    <property type="entry name" value="Scorpion_toxinL/defensin"/>
</dbReference>
<dbReference type="Pfam" id="PF00537">
    <property type="entry name" value="Toxin_3"/>
    <property type="match status" value="1"/>
</dbReference>
<dbReference type="PRINTS" id="PR00285">
    <property type="entry name" value="SCORPNTOXIN"/>
</dbReference>
<dbReference type="SMART" id="SM00505">
    <property type="entry name" value="Knot1"/>
    <property type="match status" value="1"/>
</dbReference>
<dbReference type="SUPFAM" id="SSF57095">
    <property type="entry name" value="Scorpion toxin-like"/>
    <property type="match status" value="1"/>
</dbReference>
<dbReference type="PROSITE" id="PS51863">
    <property type="entry name" value="LCN_CSAB"/>
    <property type="match status" value="1"/>
</dbReference>
<proteinExistence type="evidence at protein level"/>
<reference key="1">
    <citation type="journal article" date="2012" name="Peptides">
        <title>Purification and cDNA cloning of a novel neurotoxic peptide (Acra3) from the scorpion Androctonus crassicauda.</title>
        <authorList>
            <person name="Caliskan F."/>
            <person name="Garcia B.I."/>
            <person name="Coronas F.I."/>
            <person name="Restano-Cassulini R."/>
            <person name="Korkmaz F."/>
            <person name="Sahin Y."/>
            <person name="Corzo G."/>
            <person name="Possani L.D."/>
        </authorList>
    </citation>
    <scope>NUCLEOTIDE SEQUENCE [MRNA]</scope>
    <scope>PROTEIN SEQUENCE OF 18-40</scope>
    <scope>FUNCTION</scope>
    <scope>BIOASSAY</scope>
    <scope>MASS SPECTROMETRY</scope>
    <scope>AMIDATION AT SER-83</scope>
    <scope>SUBCELLULAR LOCATION</scope>
    <scope>TOXIC DOSE</scope>
    <source>
        <tissue>Venom</tissue>
        <tissue>Venom gland</tissue>
    </source>
</reference>
<reference key="2">
    <citation type="journal article" date="2013" name="Toxicon">
        <title>Biological assays on the effects of Acra3 peptide from Turkish scorpion Androctonus crassicauda venom on a mouse brain tumor cell line (BC3H1) and production of specific monoclonal antibodies.</title>
        <authorList>
            <person name="Caliskan F."/>
            <person name="Ergene E."/>
            <person name="Sogut I."/>
            <person name="Hatipoglu I."/>
            <person name="Basalp A."/>
            <person name="Sivas H."/>
            <person name="Kanbak G."/>
        </authorList>
    </citation>
    <scope>FUNCTION</scope>
    <source>
        <tissue>Venom</tissue>
    </source>
</reference>
<sequence>MKIIFLVLMMILSEVYSDRDGYPVHDGTNCKYSCDIREKWEYCTPLCKRRNAKTGYCYAFACWCIGLPDEVKVYGDDGIFCKSG</sequence>
<protein>
    <recommendedName>
        <fullName evidence="4 5">Toxin Acra3</fullName>
    </recommendedName>
</protein>
<organism>
    <name type="scientific">Androctonus crassicauda</name>
    <name type="common">Arabian fat-tailed scorpion</name>
    <dbReference type="NCBI Taxonomy" id="122909"/>
    <lineage>
        <taxon>Eukaryota</taxon>
        <taxon>Metazoa</taxon>
        <taxon>Ecdysozoa</taxon>
        <taxon>Arthropoda</taxon>
        <taxon>Chelicerata</taxon>
        <taxon>Arachnida</taxon>
        <taxon>Scorpiones</taxon>
        <taxon>Buthida</taxon>
        <taxon>Buthoidea</taxon>
        <taxon>Buthidae</taxon>
        <taxon>Androctonus</taxon>
    </lineage>
</organism>
<name>TX30_ANDCR</name>
<comment type="function">
    <text evidence="2 3">Toxin with unknown target. In vivo, induces severe neurotoxic events in mice such as excitability and convulsions, leading to the death of the animals within a few minutes after injection (PubMed:22819772). Exerts very strong cytotoxic effect on a mouse brain tumor cell line (BC3H1) (IC(50)=5 mg/ml). It exerts its effects by inducing a stronger necrosis than apoptosis in BC3H1 cells (PubMed:24055552).</text>
</comment>
<comment type="subcellular location">
    <subcellularLocation>
        <location evidence="2">Secreted</location>
    </subcellularLocation>
</comment>
<comment type="tissue specificity">
    <text evidence="7">Expressed by the venom gland.</text>
</comment>
<comment type="domain">
    <text evidence="6">Has the structural arrangement of an alpha-helix connected to antiparallel beta-sheets by disulfide bonds (CS-alpha/beta).</text>
</comment>
<comment type="mass spectrometry"/>
<comment type="toxic dose">
    <text evidence="2">LD(50) is less than 25 ug/kg in mouse by intracranial injection.</text>
</comment>
<comment type="miscellaneous">
    <text evidence="2">Negative results: does not inhibit Nav1.1/SCN1A, Nav1.2/SCN2A, Nav1.3/SCN3A, Nav1.4/SCN4A, Nav1.5/SCN5A, and Nav1.6/SCN8A voltage-gated sodium channels. Does not show toxicity in insects and crustaceans (PubMed:22819772).</text>
</comment>
<comment type="similarity">
    <text evidence="6">Belongs to the long (4 C-C) scorpion toxin superfamily. Sodium channel inhibitor family. Beta subfamily.</text>
</comment>